<proteinExistence type="evidence at protein level"/>
<dbReference type="EMBL" id="CU329671">
    <property type="protein sequence ID" value="CAA19034.1"/>
    <property type="molecule type" value="Genomic_DNA"/>
</dbReference>
<dbReference type="PIR" id="T39607">
    <property type="entry name" value="T39607"/>
</dbReference>
<dbReference type="RefSeq" id="NP_596764.1">
    <property type="nucleotide sequence ID" value="NM_001023784.2"/>
</dbReference>
<dbReference type="SMR" id="O60129"/>
<dbReference type="BioGRID" id="276256">
    <property type="interactions" value="24"/>
</dbReference>
<dbReference type="STRING" id="284812.O60129"/>
<dbReference type="iPTMnet" id="O60129"/>
<dbReference type="PaxDb" id="4896-SPBC16G5.15c.1"/>
<dbReference type="EnsemblFungi" id="SPBC16G5.15c.1">
    <property type="protein sequence ID" value="SPBC16G5.15c.1:pep"/>
    <property type="gene ID" value="SPBC16G5.15c"/>
</dbReference>
<dbReference type="GeneID" id="2539703"/>
<dbReference type="KEGG" id="spo:2539703"/>
<dbReference type="PomBase" id="SPBC16G5.15c">
    <property type="gene designation" value="fkh2"/>
</dbReference>
<dbReference type="VEuPathDB" id="FungiDB:SPBC16G5.15c"/>
<dbReference type="eggNOG" id="KOG2294">
    <property type="taxonomic scope" value="Eukaryota"/>
</dbReference>
<dbReference type="HOGENOM" id="CLU_435571_0_0_1"/>
<dbReference type="InParanoid" id="O60129"/>
<dbReference type="OMA" id="YSVMIAQ"/>
<dbReference type="PhylomeDB" id="O60129"/>
<dbReference type="PRO" id="PR:O60129"/>
<dbReference type="Proteomes" id="UP000002485">
    <property type="component" value="Chromosome II"/>
</dbReference>
<dbReference type="GO" id="GO:0000785">
    <property type="term" value="C:chromatin"/>
    <property type="evidence" value="ECO:0000314"/>
    <property type="project" value="PomBase"/>
</dbReference>
<dbReference type="GO" id="GO:0097221">
    <property type="term" value="C:M/G1 phase-specific MADS box-forkhead transcription factor complex"/>
    <property type="evidence" value="ECO:0000314"/>
    <property type="project" value="PomBase"/>
</dbReference>
<dbReference type="GO" id="GO:0005634">
    <property type="term" value="C:nucleus"/>
    <property type="evidence" value="ECO:0000314"/>
    <property type="project" value="PomBase"/>
</dbReference>
<dbReference type="GO" id="GO:0001228">
    <property type="term" value="F:DNA-binding transcription activator activity, RNA polymerase II-specific"/>
    <property type="evidence" value="ECO:0000314"/>
    <property type="project" value="PomBase"/>
</dbReference>
<dbReference type="GO" id="GO:0000981">
    <property type="term" value="F:DNA-binding transcription factor activity, RNA polymerase II-specific"/>
    <property type="evidence" value="ECO:0000314"/>
    <property type="project" value="PomBase"/>
</dbReference>
<dbReference type="GO" id="GO:0001227">
    <property type="term" value="F:DNA-binding transcription repressor activity, RNA polymerase II-specific"/>
    <property type="evidence" value="ECO:0000315"/>
    <property type="project" value="PomBase"/>
</dbReference>
<dbReference type="GO" id="GO:0000978">
    <property type="term" value="F:RNA polymerase II cis-regulatory region sequence-specific DNA binding"/>
    <property type="evidence" value="ECO:0000314"/>
    <property type="project" value="PomBase"/>
</dbReference>
<dbReference type="GO" id="GO:0000917">
    <property type="term" value="P:division septum assembly"/>
    <property type="evidence" value="ECO:0007669"/>
    <property type="project" value="UniProtKB-KW"/>
</dbReference>
<dbReference type="GO" id="GO:0110045">
    <property type="term" value="P:negative regulation of cell cycle switching, mitotic to meiotic cell cycle"/>
    <property type="evidence" value="ECO:0000315"/>
    <property type="project" value="PomBase"/>
</dbReference>
<dbReference type="GO" id="GO:1900237">
    <property type="term" value="P:positive regulation of induction of conjugation with cellular fusion"/>
    <property type="evidence" value="ECO:0000315"/>
    <property type="project" value="PomBase"/>
</dbReference>
<dbReference type="GO" id="GO:0045944">
    <property type="term" value="P:positive regulation of transcription by RNA polymerase II"/>
    <property type="evidence" value="ECO:0000315"/>
    <property type="project" value="PomBase"/>
</dbReference>
<dbReference type="GO" id="GO:0006357">
    <property type="term" value="P:regulation of transcription by RNA polymerase II"/>
    <property type="evidence" value="ECO:0000315"/>
    <property type="project" value="PomBase"/>
</dbReference>
<dbReference type="CDD" id="cd00059">
    <property type="entry name" value="FH_FOX"/>
    <property type="match status" value="1"/>
</dbReference>
<dbReference type="CDD" id="cd22701">
    <property type="entry name" value="FHA_FKH1-like"/>
    <property type="match status" value="1"/>
</dbReference>
<dbReference type="FunFam" id="1.10.10.10:FF:000030">
    <property type="entry name" value="Forkhead box protein K2"/>
    <property type="match status" value="1"/>
</dbReference>
<dbReference type="Gene3D" id="2.60.200.20">
    <property type="match status" value="1"/>
</dbReference>
<dbReference type="Gene3D" id="1.10.10.10">
    <property type="entry name" value="Winged helix-like DNA-binding domain superfamily/Winged helix DNA-binding domain"/>
    <property type="match status" value="1"/>
</dbReference>
<dbReference type="InterPro" id="IPR000253">
    <property type="entry name" value="FHA_dom"/>
</dbReference>
<dbReference type="InterPro" id="IPR001766">
    <property type="entry name" value="Fork_head_dom"/>
</dbReference>
<dbReference type="InterPro" id="IPR008984">
    <property type="entry name" value="SMAD_FHA_dom_sf"/>
</dbReference>
<dbReference type="InterPro" id="IPR018122">
    <property type="entry name" value="TF_fork_head_CS_1"/>
</dbReference>
<dbReference type="InterPro" id="IPR030456">
    <property type="entry name" value="TF_fork_head_CS_2"/>
</dbReference>
<dbReference type="InterPro" id="IPR036388">
    <property type="entry name" value="WH-like_DNA-bd_sf"/>
</dbReference>
<dbReference type="InterPro" id="IPR036390">
    <property type="entry name" value="WH_DNA-bd_sf"/>
</dbReference>
<dbReference type="PANTHER" id="PTHR45881">
    <property type="entry name" value="CHECKPOINT SUPPRESSOR 1-LIKE, ISOFORM A-RELATED"/>
    <property type="match status" value="1"/>
</dbReference>
<dbReference type="PANTHER" id="PTHR45881:SF1">
    <property type="entry name" value="FORK HEAD PROTEIN HOMOLOG 2"/>
    <property type="match status" value="1"/>
</dbReference>
<dbReference type="Pfam" id="PF00498">
    <property type="entry name" value="FHA"/>
    <property type="match status" value="1"/>
</dbReference>
<dbReference type="Pfam" id="PF00250">
    <property type="entry name" value="Forkhead"/>
    <property type="match status" value="1"/>
</dbReference>
<dbReference type="PRINTS" id="PR00053">
    <property type="entry name" value="FORKHEAD"/>
</dbReference>
<dbReference type="SMART" id="SM00339">
    <property type="entry name" value="FH"/>
    <property type="match status" value="1"/>
</dbReference>
<dbReference type="SUPFAM" id="SSF49879">
    <property type="entry name" value="SMAD/FHA domain"/>
    <property type="match status" value="1"/>
</dbReference>
<dbReference type="SUPFAM" id="SSF46785">
    <property type="entry name" value="Winged helix' DNA-binding domain"/>
    <property type="match status" value="1"/>
</dbReference>
<dbReference type="PROSITE" id="PS50006">
    <property type="entry name" value="FHA_DOMAIN"/>
    <property type="match status" value="1"/>
</dbReference>
<dbReference type="PROSITE" id="PS00657">
    <property type="entry name" value="FORK_HEAD_1"/>
    <property type="match status" value="1"/>
</dbReference>
<dbReference type="PROSITE" id="PS00658">
    <property type="entry name" value="FORK_HEAD_2"/>
    <property type="match status" value="1"/>
</dbReference>
<dbReference type="PROSITE" id="PS50039">
    <property type="entry name" value="FORK_HEAD_3"/>
    <property type="match status" value="1"/>
</dbReference>
<gene>
    <name type="primary">fkh2</name>
    <name type="ORF">SPBC16G5.15c</name>
</gene>
<protein>
    <recommendedName>
        <fullName>Fork head protein homolog 2</fullName>
    </recommendedName>
</protein>
<comment type="function">
    <text evidence="4 5 6">Required for promoter sequence element PCB-driven, M-phase-specific transcription. Acts as a transcriptional activator with a role in the regulation of mitosis. Binds, cooperatively with mcm1, the CLB cluster regulatory elements throughout the cell cycle. Regulates the periodic transcription of cdc15 and spo12. Required for the correct timing, positioning and contraction of the division septum.</text>
</comment>
<comment type="subcellular location">
    <subcellularLocation>
        <location evidence="2 4">Nucleus</location>
    </subcellularLocation>
</comment>
<comment type="PTM">
    <text evidence="4 5 7">Phosphorylated. Occurs periodically during mitosis.</text>
</comment>
<keyword id="KW-0010">Activator</keyword>
<keyword id="KW-0131">Cell cycle</keyword>
<keyword id="KW-0132">Cell division</keyword>
<keyword id="KW-0238">DNA-binding</keyword>
<keyword id="KW-0498">Mitosis</keyword>
<keyword id="KW-0539">Nucleus</keyword>
<keyword id="KW-0597">Phosphoprotein</keyword>
<keyword id="KW-1185">Reference proteome</keyword>
<keyword id="KW-0717">Septation</keyword>
<keyword id="KW-0804">Transcription</keyword>
<keyword id="KW-0805">Transcription regulation</keyword>
<sequence>MTVRRLESKSEHISDDEERKEQLDYKKQMDVDTDRNIVLNGRLESQIAKLSVPPHEMRVVDDYSNSKNAERHSGEIQAYAKFAGSTWTYYVKKIRIILGREPANPSPKGKNEDLEVIDMNFGPSKVVSRKHAVVEYDLDDQTWNCSVYGRNGIKVDGKLFKNGETVKLTSGSILEVAGLQMMFVLPNAAEQKQTDESTIKEDAIKSEISAAVNDAAEYGDNKKPPYSYSVMIAQAILSSSECMMTLSNIYSWISTHYPYYRTTKSGWQNSIRHNLSLNKAFRKVPRKSGEQGKGMKWSIVPEFREEFIAKTRKTPRKRSPSSPVPLLAKKREGSPSLPIPILPKMKDTSIPAAEPASSTTSARDQTPSTPKDVGSPSTAETSAEEKQMETYKTPTHAALSDIISTHDYALDANSASQTKKAAFGSPIGSSTYPTSSPAPFWKYVAVPNPHDWPQVGSYDTISPYRNPVNSHLIYSQIQQSSPKKIDEQLHDLQGVDLVNGFEGISSWRESMVNKLRSSVSDSPTMNLANSNSKSSPVAVQRVSTLPQASANKQAKEMESKMSNSPTQKSKTEENNQAVRAILDASATMEKQYDLHRLPTPTSQTESASVPQIANPPNSQNLVKEKSPQQYIQVPQSNVKSSA</sequence>
<accession>O60129</accession>
<name>FKH2_SCHPO</name>
<organism>
    <name type="scientific">Schizosaccharomyces pombe (strain 972 / ATCC 24843)</name>
    <name type="common">Fission yeast</name>
    <dbReference type="NCBI Taxonomy" id="284812"/>
    <lineage>
        <taxon>Eukaryota</taxon>
        <taxon>Fungi</taxon>
        <taxon>Dikarya</taxon>
        <taxon>Ascomycota</taxon>
        <taxon>Taphrinomycotina</taxon>
        <taxon>Schizosaccharomycetes</taxon>
        <taxon>Schizosaccharomycetales</taxon>
        <taxon>Schizosaccharomycetaceae</taxon>
        <taxon>Schizosaccharomyces</taxon>
    </lineage>
</organism>
<evidence type="ECO:0000255" key="1">
    <source>
        <dbReference type="PROSITE-ProRule" id="PRU00086"/>
    </source>
</evidence>
<evidence type="ECO:0000255" key="2">
    <source>
        <dbReference type="PROSITE-ProRule" id="PRU00089"/>
    </source>
</evidence>
<evidence type="ECO:0000256" key="3">
    <source>
        <dbReference type="SAM" id="MobiDB-lite"/>
    </source>
</evidence>
<evidence type="ECO:0000269" key="4">
    <source>
    </source>
</evidence>
<evidence type="ECO:0000269" key="5">
    <source>
    </source>
</evidence>
<evidence type="ECO:0000269" key="6">
    <source>
    </source>
</evidence>
<evidence type="ECO:0000269" key="7">
    <source>
    </source>
</evidence>
<reference key="1">
    <citation type="journal article" date="2004" name="J. Cell Sci.">
        <title>Fkh2p and Sep1p regulate mitotic gene transcription in fission yeast.</title>
        <authorList>
            <person name="Buck V."/>
            <person name="Ng S.S."/>
            <person name="Ruiz-Garcia A.B."/>
            <person name="Papadopoulou K."/>
            <person name="Bhatti S."/>
            <person name="Samuel J.M."/>
            <person name="Anderson M."/>
            <person name="Millar J.B.A."/>
            <person name="McInerny C.J."/>
        </authorList>
    </citation>
    <scope>NUCLEOTIDE SEQUENCE [GENOMIC DNA]</scope>
    <scope>FUNCTION</scope>
    <scope>PHOSPHORYLATION</scope>
</reference>
<reference key="2">
    <citation type="journal article" date="2002" name="Nature">
        <title>The genome sequence of Schizosaccharomyces pombe.</title>
        <authorList>
            <person name="Wood V."/>
            <person name="Gwilliam R."/>
            <person name="Rajandream M.A."/>
            <person name="Lyne M.H."/>
            <person name="Lyne R."/>
            <person name="Stewart A."/>
            <person name="Sgouros J.G."/>
            <person name="Peat N."/>
            <person name="Hayles J."/>
            <person name="Baker S.G."/>
            <person name="Basham D."/>
            <person name="Bowman S."/>
            <person name="Brooks K."/>
            <person name="Brown D."/>
            <person name="Brown S."/>
            <person name="Chillingworth T."/>
            <person name="Churcher C.M."/>
            <person name="Collins M."/>
            <person name="Connor R."/>
            <person name="Cronin A."/>
            <person name="Davis P."/>
            <person name="Feltwell T."/>
            <person name="Fraser A."/>
            <person name="Gentles S."/>
            <person name="Goble A."/>
            <person name="Hamlin N."/>
            <person name="Harris D.E."/>
            <person name="Hidalgo J."/>
            <person name="Hodgson G."/>
            <person name="Holroyd S."/>
            <person name="Hornsby T."/>
            <person name="Howarth S."/>
            <person name="Huckle E.J."/>
            <person name="Hunt S."/>
            <person name="Jagels K."/>
            <person name="James K.D."/>
            <person name="Jones L."/>
            <person name="Jones M."/>
            <person name="Leather S."/>
            <person name="McDonald S."/>
            <person name="McLean J."/>
            <person name="Mooney P."/>
            <person name="Moule S."/>
            <person name="Mungall K.L."/>
            <person name="Murphy L.D."/>
            <person name="Niblett D."/>
            <person name="Odell C."/>
            <person name="Oliver K."/>
            <person name="O'Neil S."/>
            <person name="Pearson D."/>
            <person name="Quail M.A."/>
            <person name="Rabbinowitsch E."/>
            <person name="Rutherford K.M."/>
            <person name="Rutter S."/>
            <person name="Saunders D."/>
            <person name="Seeger K."/>
            <person name="Sharp S."/>
            <person name="Skelton J."/>
            <person name="Simmonds M.N."/>
            <person name="Squares R."/>
            <person name="Squares S."/>
            <person name="Stevens K."/>
            <person name="Taylor K."/>
            <person name="Taylor R.G."/>
            <person name="Tivey A."/>
            <person name="Walsh S.V."/>
            <person name="Warren T."/>
            <person name="Whitehead S."/>
            <person name="Woodward J.R."/>
            <person name="Volckaert G."/>
            <person name="Aert R."/>
            <person name="Robben J."/>
            <person name="Grymonprez B."/>
            <person name="Weltjens I."/>
            <person name="Vanstreels E."/>
            <person name="Rieger M."/>
            <person name="Schaefer M."/>
            <person name="Mueller-Auer S."/>
            <person name="Gabel C."/>
            <person name="Fuchs M."/>
            <person name="Duesterhoeft A."/>
            <person name="Fritzc C."/>
            <person name="Holzer E."/>
            <person name="Moestl D."/>
            <person name="Hilbert H."/>
            <person name="Borzym K."/>
            <person name="Langer I."/>
            <person name="Beck A."/>
            <person name="Lehrach H."/>
            <person name="Reinhardt R."/>
            <person name="Pohl T.M."/>
            <person name="Eger P."/>
            <person name="Zimmermann W."/>
            <person name="Wedler H."/>
            <person name="Wambutt R."/>
            <person name="Purnelle B."/>
            <person name="Goffeau A."/>
            <person name="Cadieu E."/>
            <person name="Dreano S."/>
            <person name="Gloux S."/>
            <person name="Lelaure V."/>
            <person name="Mottier S."/>
            <person name="Galibert F."/>
            <person name="Aves S.J."/>
            <person name="Xiang Z."/>
            <person name="Hunt C."/>
            <person name="Moore K."/>
            <person name="Hurst S.M."/>
            <person name="Lucas M."/>
            <person name="Rochet M."/>
            <person name="Gaillardin C."/>
            <person name="Tallada V.A."/>
            <person name="Garzon A."/>
            <person name="Thode G."/>
            <person name="Daga R.R."/>
            <person name="Cruzado L."/>
            <person name="Jimenez J."/>
            <person name="Sanchez M."/>
            <person name="del Rey F."/>
            <person name="Benito J."/>
            <person name="Dominguez A."/>
            <person name="Revuelta J.L."/>
            <person name="Moreno S."/>
            <person name="Armstrong J."/>
            <person name="Forsburg S.L."/>
            <person name="Cerutti L."/>
            <person name="Lowe T."/>
            <person name="McCombie W.R."/>
            <person name="Paulsen I."/>
            <person name="Potashkin J."/>
            <person name="Shpakovski G.V."/>
            <person name="Ussery D."/>
            <person name="Barrell B.G."/>
            <person name="Nurse P."/>
        </authorList>
    </citation>
    <scope>NUCLEOTIDE SEQUENCE [LARGE SCALE GENOMIC DNA]</scope>
    <source>
        <strain>972 / ATCC 24843</strain>
    </source>
</reference>
<reference key="3">
    <citation type="journal article" date="2004" name="Eukaryot. Cell">
        <title>The forkhead transcription factor Fkh2 regulates the cell division cycle of Schizosaccharomyces pombe.</title>
        <authorList>
            <person name="Bulmer R."/>
            <person name="Pic-Taylor A."/>
            <person name="Whitehall S.K."/>
            <person name="Martin K.A."/>
            <person name="Millar J.B.A."/>
            <person name="Quinn J."/>
            <person name="Morgan B.A."/>
        </authorList>
    </citation>
    <scope>FUNCTION</scope>
    <scope>SUBCELLULAR LOCATION</scope>
    <scope>PHOSPHORYLATION</scope>
</reference>
<reference key="4">
    <citation type="journal article" date="2005" name="Gene">
        <title>Characterisation of two novel fork-head gene homologues of Schizosaccharomyces pombe: their involvement in cell cycle and sexual differentiation.</title>
        <authorList>
            <person name="Szilagyi Z."/>
            <person name="Batta G."/>
            <person name="Enczi K."/>
            <person name="Sipiczki M."/>
        </authorList>
    </citation>
    <scope>FUNCTION</scope>
</reference>
<reference key="5">
    <citation type="journal article" date="2008" name="J. Proteome Res.">
        <title>Phosphoproteome analysis of fission yeast.</title>
        <authorList>
            <person name="Wilson-Grady J.T."/>
            <person name="Villen J."/>
            <person name="Gygi S.P."/>
        </authorList>
    </citation>
    <scope>PHOSPHORYLATION [LARGE SCALE ANALYSIS] AT SER-319; SER-321; SER-322; SER-334; SER-336; SER-375; SER-535 AND SER-626</scope>
    <scope>IDENTIFICATION BY MASS SPECTROMETRY</scope>
</reference>
<feature type="chain" id="PRO_0000091905" description="Fork head protein homolog 2">
    <location>
        <begin position="1"/>
        <end position="642"/>
    </location>
</feature>
<feature type="domain" description="FHA" evidence="1">
    <location>
        <begin position="96"/>
        <end position="160"/>
    </location>
</feature>
<feature type="DNA-binding region" description="Fork-head" evidence="2">
    <location>
        <begin position="223"/>
        <end position="318"/>
    </location>
</feature>
<feature type="region of interest" description="Disordered" evidence="3">
    <location>
        <begin position="1"/>
        <end position="23"/>
    </location>
</feature>
<feature type="region of interest" description="Disordered" evidence="3">
    <location>
        <begin position="310"/>
        <end position="392"/>
    </location>
</feature>
<feature type="region of interest" description="Disordered" evidence="3">
    <location>
        <begin position="519"/>
        <end position="574"/>
    </location>
</feature>
<feature type="region of interest" description="Disordered" evidence="3">
    <location>
        <begin position="586"/>
        <end position="642"/>
    </location>
</feature>
<feature type="compositionally biased region" description="Basic residues" evidence="3">
    <location>
        <begin position="310"/>
        <end position="319"/>
    </location>
</feature>
<feature type="compositionally biased region" description="Low complexity" evidence="3">
    <location>
        <begin position="348"/>
        <end position="362"/>
    </location>
</feature>
<feature type="compositionally biased region" description="Polar residues" evidence="3">
    <location>
        <begin position="363"/>
        <end position="381"/>
    </location>
</feature>
<feature type="compositionally biased region" description="Polar residues" evidence="3">
    <location>
        <begin position="519"/>
        <end position="552"/>
    </location>
</feature>
<feature type="compositionally biased region" description="Polar residues" evidence="3">
    <location>
        <begin position="599"/>
        <end position="642"/>
    </location>
</feature>
<feature type="modified residue" description="Phosphoserine" evidence="7">
    <location>
        <position position="319"/>
    </location>
</feature>
<feature type="modified residue" description="Phosphoserine" evidence="7">
    <location>
        <position position="321"/>
    </location>
</feature>
<feature type="modified residue" description="Phosphoserine" evidence="7">
    <location>
        <position position="322"/>
    </location>
</feature>
<feature type="modified residue" description="Phosphoserine" evidence="7">
    <location>
        <position position="334"/>
    </location>
</feature>
<feature type="modified residue" description="Phosphoserine" evidence="7">
    <location>
        <position position="336"/>
    </location>
</feature>
<feature type="modified residue" description="Phosphoserine" evidence="7">
    <location>
        <position position="375"/>
    </location>
</feature>
<feature type="modified residue" description="Phosphoserine" evidence="7">
    <location>
        <position position="535"/>
    </location>
</feature>
<feature type="modified residue" description="Phosphoserine" evidence="7">
    <location>
        <position position="626"/>
    </location>
</feature>